<reference key="1">
    <citation type="journal article" date="2005" name="Science">
        <title>The transcriptional landscape of the mammalian genome.</title>
        <authorList>
            <person name="Carninci P."/>
            <person name="Kasukawa T."/>
            <person name="Katayama S."/>
            <person name="Gough J."/>
            <person name="Frith M.C."/>
            <person name="Maeda N."/>
            <person name="Oyama R."/>
            <person name="Ravasi T."/>
            <person name="Lenhard B."/>
            <person name="Wells C."/>
            <person name="Kodzius R."/>
            <person name="Shimokawa K."/>
            <person name="Bajic V.B."/>
            <person name="Brenner S.E."/>
            <person name="Batalov S."/>
            <person name="Forrest A.R."/>
            <person name="Zavolan M."/>
            <person name="Davis M.J."/>
            <person name="Wilming L.G."/>
            <person name="Aidinis V."/>
            <person name="Allen J.E."/>
            <person name="Ambesi-Impiombato A."/>
            <person name="Apweiler R."/>
            <person name="Aturaliya R.N."/>
            <person name="Bailey T.L."/>
            <person name="Bansal M."/>
            <person name="Baxter L."/>
            <person name="Beisel K.W."/>
            <person name="Bersano T."/>
            <person name="Bono H."/>
            <person name="Chalk A.M."/>
            <person name="Chiu K.P."/>
            <person name="Choudhary V."/>
            <person name="Christoffels A."/>
            <person name="Clutterbuck D.R."/>
            <person name="Crowe M.L."/>
            <person name="Dalla E."/>
            <person name="Dalrymple B.P."/>
            <person name="de Bono B."/>
            <person name="Della Gatta G."/>
            <person name="di Bernardo D."/>
            <person name="Down T."/>
            <person name="Engstrom P."/>
            <person name="Fagiolini M."/>
            <person name="Faulkner G."/>
            <person name="Fletcher C.F."/>
            <person name="Fukushima T."/>
            <person name="Furuno M."/>
            <person name="Futaki S."/>
            <person name="Gariboldi M."/>
            <person name="Georgii-Hemming P."/>
            <person name="Gingeras T.R."/>
            <person name="Gojobori T."/>
            <person name="Green R.E."/>
            <person name="Gustincich S."/>
            <person name="Harbers M."/>
            <person name="Hayashi Y."/>
            <person name="Hensch T.K."/>
            <person name="Hirokawa N."/>
            <person name="Hill D."/>
            <person name="Huminiecki L."/>
            <person name="Iacono M."/>
            <person name="Ikeo K."/>
            <person name="Iwama A."/>
            <person name="Ishikawa T."/>
            <person name="Jakt M."/>
            <person name="Kanapin A."/>
            <person name="Katoh M."/>
            <person name="Kawasawa Y."/>
            <person name="Kelso J."/>
            <person name="Kitamura H."/>
            <person name="Kitano H."/>
            <person name="Kollias G."/>
            <person name="Krishnan S.P."/>
            <person name="Kruger A."/>
            <person name="Kummerfeld S.K."/>
            <person name="Kurochkin I.V."/>
            <person name="Lareau L.F."/>
            <person name="Lazarevic D."/>
            <person name="Lipovich L."/>
            <person name="Liu J."/>
            <person name="Liuni S."/>
            <person name="McWilliam S."/>
            <person name="Madan Babu M."/>
            <person name="Madera M."/>
            <person name="Marchionni L."/>
            <person name="Matsuda H."/>
            <person name="Matsuzawa S."/>
            <person name="Miki H."/>
            <person name="Mignone F."/>
            <person name="Miyake S."/>
            <person name="Morris K."/>
            <person name="Mottagui-Tabar S."/>
            <person name="Mulder N."/>
            <person name="Nakano N."/>
            <person name="Nakauchi H."/>
            <person name="Ng P."/>
            <person name="Nilsson R."/>
            <person name="Nishiguchi S."/>
            <person name="Nishikawa S."/>
            <person name="Nori F."/>
            <person name="Ohara O."/>
            <person name="Okazaki Y."/>
            <person name="Orlando V."/>
            <person name="Pang K.C."/>
            <person name="Pavan W.J."/>
            <person name="Pavesi G."/>
            <person name="Pesole G."/>
            <person name="Petrovsky N."/>
            <person name="Piazza S."/>
            <person name="Reed J."/>
            <person name="Reid J.F."/>
            <person name="Ring B.Z."/>
            <person name="Ringwald M."/>
            <person name="Rost B."/>
            <person name="Ruan Y."/>
            <person name="Salzberg S.L."/>
            <person name="Sandelin A."/>
            <person name="Schneider C."/>
            <person name="Schoenbach C."/>
            <person name="Sekiguchi K."/>
            <person name="Semple C.A."/>
            <person name="Seno S."/>
            <person name="Sessa L."/>
            <person name="Sheng Y."/>
            <person name="Shibata Y."/>
            <person name="Shimada H."/>
            <person name="Shimada K."/>
            <person name="Silva D."/>
            <person name="Sinclair B."/>
            <person name="Sperling S."/>
            <person name="Stupka E."/>
            <person name="Sugiura K."/>
            <person name="Sultana R."/>
            <person name="Takenaka Y."/>
            <person name="Taki K."/>
            <person name="Tammoja K."/>
            <person name="Tan S.L."/>
            <person name="Tang S."/>
            <person name="Taylor M.S."/>
            <person name="Tegner J."/>
            <person name="Teichmann S.A."/>
            <person name="Ueda H.R."/>
            <person name="van Nimwegen E."/>
            <person name="Verardo R."/>
            <person name="Wei C.L."/>
            <person name="Yagi K."/>
            <person name="Yamanishi H."/>
            <person name="Zabarovsky E."/>
            <person name="Zhu S."/>
            <person name="Zimmer A."/>
            <person name="Hide W."/>
            <person name="Bult C."/>
            <person name="Grimmond S.M."/>
            <person name="Teasdale R.D."/>
            <person name="Liu E.T."/>
            <person name="Brusic V."/>
            <person name="Quackenbush J."/>
            <person name="Wahlestedt C."/>
            <person name="Mattick J.S."/>
            <person name="Hume D.A."/>
            <person name="Kai C."/>
            <person name="Sasaki D."/>
            <person name="Tomaru Y."/>
            <person name="Fukuda S."/>
            <person name="Kanamori-Katayama M."/>
            <person name="Suzuki M."/>
            <person name="Aoki J."/>
            <person name="Arakawa T."/>
            <person name="Iida J."/>
            <person name="Imamura K."/>
            <person name="Itoh M."/>
            <person name="Kato T."/>
            <person name="Kawaji H."/>
            <person name="Kawagashira N."/>
            <person name="Kawashima T."/>
            <person name="Kojima M."/>
            <person name="Kondo S."/>
            <person name="Konno H."/>
            <person name="Nakano K."/>
            <person name="Ninomiya N."/>
            <person name="Nishio T."/>
            <person name="Okada M."/>
            <person name="Plessy C."/>
            <person name="Shibata K."/>
            <person name="Shiraki T."/>
            <person name="Suzuki S."/>
            <person name="Tagami M."/>
            <person name="Waki K."/>
            <person name="Watahiki A."/>
            <person name="Okamura-Oho Y."/>
            <person name="Suzuki H."/>
            <person name="Kawai J."/>
            <person name="Hayashizaki Y."/>
        </authorList>
    </citation>
    <scope>NUCLEOTIDE SEQUENCE [LARGE SCALE MRNA]</scope>
    <source>
        <strain>C57BL/6J</strain>
        <strain>NOD</strain>
        <tissue>Pancreas</tissue>
    </source>
</reference>
<reference key="2">
    <citation type="journal article" date="2009" name="PLoS Biol.">
        <title>Lineage-specific biology revealed by a finished genome assembly of the mouse.</title>
        <authorList>
            <person name="Church D.M."/>
            <person name="Goodstadt L."/>
            <person name="Hillier L.W."/>
            <person name="Zody M.C."/>
            <person name="Goldstein S."/>
            <person name="She X."/>
            <person name="Bult C.J."/>
            <person name="Agarwala R."/>
            <person name="Cherry J.L."/>
            <person name="DiCuccio M."/>
            <person name="Hlavina W."/>
            <person name="Kapustin Y."/>
            <person name="Meric P."/>
            <person name="Maglott D."/>
            <person name="Birtle Z."/>
            <person name="Marques A.C."/>
            <person name="Graves T."/>
            <person name="Zhou S."/>
            <person name="Teague B."/>
            <person name="Potamousis K."/>
            <person name="Churas C."/>
            <person name="Place M."/>
            <person name="Herschleb J."/>
            <person name="Runnheim R."/>
            <person name="Forrest D."/>
            <person name="Amos-Landgraf J."/>
            <person name="Schwartz D.C."/>
            <person name="Cheng Z."/>
            <person name="Lindblad-Toh K."/>
            <person name="Eichler E.E."/>
            <person name="Ponting C.P."/>
        </authorList>
    </citation>
    <scope>NUCLEOTIDE SEQUENCE [LARGE SCALE GENOMIC DNA]</scope>
    <source>
        <strain>C57BL/6J</strain>
    </source>
</reference>
<reference key="3">
    <citation type="journal article" date="2004" name="Genome Res.">
        <title>The status, quality, and expansion of the NIH full-length cDNA project: the Mammalian Gene Collection (MGC).</title>
        <authorList>
            <consortium name="The MGC Project Team"/>
        </authorList>
    </citation>
    <scope>NUCLEOTIDE SEQUENCE [LARGE SCALE MRNA]</scope>
    <source>
        <strain>FVB/N</strain>
        <tissue>Colon</tissue>
        <tissue>Mammary tumor</tissue>
    </source>
</reference>
<reference key="4">
    <citation type="journal article" date="2010" name="Cell">
        <title>A tissue-specific atlas of mouse protein phosphorylation and expression.</title>
        <authorList>
            <person name="Huttlin E.L."/>
            <person name="Jedrychowski M.P."/>
            <person name="Elias J.E."/>
            <person name="Goswami T."/>
            <person name="Rad R."/>
            <person name="Beausoleil S.A."/>
            <person name="Villen J."/>
            <person name="Haas W."/>
            <person name="Sowa M.E."/>
            <person name="Gygi S.P."/>
        </authorList>
    </citation>
    <scope>IDENTIFICATION BY MASS SPECTROMETRY [LARGE SCALE ANALYSIS]</scope>
    <source>
        <tissue>Brown adipose tissue</tissue>
        <tissue>Heart</tissue>
        <tissue>Kidney</tissue>
        <tissue>Lung</tissue>
        <tissue>Pancreas</tissue>
        <tissue>Testis</tissue>
    </source>
</reference>
<keyword id="KW-0472">Membrane</keyword>
<keyword id="KW-0496">Mitochondrion</keyword>
<keyword id="KW-0999">Mitochondrion inner membrane</keyword>
<keyword id="KW-1185">Reference proteome</keyword>
<keyword id="KW-0677">Repeat</keyword>
<keyword id="KW-0812">Transmembrane</keyword>
<keyword id="KW-1133">Transmembrane helix</keyword>
<keyword id="KW-0813">Transport</keyword>
<name>S2535_MOUSE</name>
<protein>
    <recommendedName>
        <fullName>Solute carrier family 25 member 35</fullName>
    </recommendedName>
</protein>
<evidence type="ECO:0000250" key="1"/>
<evidence type="ECO:0000250" key="2">
    <source>
        <dbReference type="UniProtKB" id="Q3KQZ1"/>
    </source>
</evidence>
<evidence type="ECO:0000255" key="3"/>
<evidence type="ECO:0000305" key="4"/>
<accession>Q5SWT3</accession>
<accession>Q3TBP2</accession>
<accession>Q99KM5</accession>
<accession>Q9D913</accession>
<proteinExistence type="evidence at protein level"/>
<organism>
    <name type="scientific">Mus musculus</name>
    <name type="common">Mouse</name>
    <dbReference type="NCBI Taxonomy" id="10090"/>
    <lineage>
        <taxon>Eukaryota</taxon>
        <taxon>Metazoa</taxon>
        <taxon>Chordata</taxon>
        <taxon>Craniata</taxon>
        <taxon>Vertebrata</taxon>
        <taxon>Euteleostomi</taxon>
        <taxon>Mammalia</taxon>
        <taxon>Eutheria</taxon>
        <taxon>Euarchontoglires</taxon>
        <taxon>Glires</taxon>
        <taxon>Rodentia</taxon>
        <taxon>Myomorpha</taxon>
        <taxon>Muroidea</taxon>
        <taxon>Muridae</taxon>
        <taxon>Murinae</taxon>
        <taxon>Mus</taxon>
        <taxon>Mus</taxon>
    </lineage>
</organism>
<dbReference type="EMBL" id="AK007453">
    <property type="protein sequence ID" value="BAB25048.1"/>
    <property type="molecule type" value="mRNA"/>
</dbReference>
<dbReference type="EMBL" id="AK171131">
    <property type="protein sequence ID" value="BAE42267.1"/>
    <property type="molecule type" value="mRNA"/>
</dbReference>
<dbReference type="EMBL" id="AL603662">
    <property type="protein sequence ID" value="CAI25535.1"/>
    <property type="status" value="ALT_SEQ"/>
    <property type="molecule type" value="Genomic_DNA"/>
</dbReference>
<dbReference type="EMBL" id="AL603662">
    <property type="protein sequence ID" value="CAI25536.1"/>
    <property type="molecule type" value="Genomic_DNA"/>
</dbReference>
<dbReference type="EMBL" id="BC004569">
    <property type="protein sequence ID" value="AAH04569.1"/>
    <property type="status" value="ALT_INIT"/>
    <property type="molecule type" value="mRNA"/>
</dbReference>
<dbReference type="EMBL" id="BC019996">
    <property type="protein sequence ID" value="AAH19996.1"/>
    <property type="molecule type" value="mRNA"/>
</dbReference>
<dbReference type="CCDS" id="CCDS24874.1"/>
<dbReference type="RefSeq" id="NP_001404971.1">
    <property type="nucleotide sequence ID" value="NM_001418042.1"/>
</dbReference>
<dbReference type="RefSeq" id="NP_082324.1">
    <property type="nucleotide sequence ID" value="NM_028048.3"/>
</dbReference>
<dbReference type="RefSeq" id="XP_006534336.1">
    <property type="nucleotide sequence ID" value="XM_006534273.2"/>
</dbReference>
<dbReference type="SMR" id="Q5SWT3"/>
<dbReference type="FunCoup" id="Q5SWT3">
    <property type="interactions" value="786"/>
</dbReference>
<dbReference type="IntAct" id="Q5SWT3">
    <property type="interactions" value="1"/>
</dbReference>
<dbReference type="STRING" id="10090.ENSMUSP00000099666"/>
<dbReference type="iPTMnet" id="Q5SWT3"/>
<dbReference type="PhosphoSitePlus" id="Q5SWT3"/>
<dbReference type="SwissPalm" id="Q5SWT3"/>
<dbReference type="jPOST" id="Q5SWT3"/>
<dbReference type="PaxDb" id="10090-ENSMUSP00000099666"/>
<dbReference type="PeptideAtlas" id="Q5SWT3"/>
<dbReference type="ProteomicsDB" id="256862"/>
<dbReference type="Pumba" id="Q5SWT3"/>
<dbReference type="Antibodypedia" id="24621">
    <property type="antibodies" value="60 antibodies from 15 providers"/>
</dbReference>
<dbReference type="DNASU" id="71998"/>
<dbReference type="Ensembl" id="ENSMUST00000102606.10">
    <property type="protein sequence ID" value="ENSMUSP00000099666.4"/>
    <property type="gene ID" value="ENSMUSG00000018740.15"/>
</dbReference>
<dbReference type="GeneID" id="71998"/>
<dbReference type="KEGG" id="mmu:71998"/>
<dbReference type="UCSC" id="uc007jop.1">
    <property type="organism name" value="mouse"/>
</dbReference>
<dbReference type="AGR" id="MGI:1919248"/>
<dbReference type="CTD" id="399512"/>
<dbReference type="MGI" id="MGI:1919248">
    <property type="gene designation" value="Slc25a35"/>
</dbReference>
<dbReference type="VEuPathDB" id="HostDB:ENSMUSG00000018740"/>
<dbReference type="eggNOG" id="KOG0755">
    <property type="taxonomic scope" value="Eukaryota"/>
</dbReference>
<dbReference type="GeneTree" id="ENSGT00940000160771"/>
<dbReference type="InParanoid" id="Q5SWT3"/>
<dbReference type="OMA" id="GFYDPMR"/>
<dbReference type="OrthoDB" id="6703404at2759"/>
<dbReference type="PhylomeDB" id="Q5SWT3"/>
<dbReference type="TreeFam" id="TF324506"/>
<dbReference type="BioGRID-ORCS" id="71998">
    <property type="hits" value="3 hits in 76 CRISPR screens"/>
</dbReference>
<dbReference type="ChiTaRS" id="Slc25a35">
    <property type="organism name" value="mouse"/>
</dbReference>
<dbReference type="PRO" id="PR:Q5SWT3"/>
<dbReference type="Proteomes" id="UP000000589">
    <property type="component" value="Chromosome 11"/>
</dbReference>
<dbReference type="RNAct" id="Q5SWT3">
    <property type="molecule type" value="protein"/>
</dbReference>
<dbReference type="Bgee" id="ENSMUSG00000018740">
    <property type="expression patterns" value="Expressed in olfactory epithelium and 144 other cell types or tissues"/>
</dbReference>
<dbReference type="ExpressionAtlas" id="Q5SWT3">
    <property type="expression patterns" value="baseline and differential"/>
</dbReference>
<dbReference type="GO" id="GO:0005743">
    <property type="term" value="C:mitochondrial inner membrane"/>
    <property type="evidence" value="ECO:0007669"/>
    <property type="project" value="UniProtKB-SubCell"/>
</dbReference>
<dbReference type="GO" id="GO:0005739">
    <property type="term" value="C:mitochondrion"/>
    <property type="evidence" value="ECO:0007005"/>
    <property type="project" value="MGI"/>
</dbReference>
<dbReference type="FunFam" id="1.50.40.10:FF:000039">
    <property type="entry name" value="Solute carrier family 25 member 35"/>
    <property type="match status" value="1"/>
</dbReference>
<dbReference type="Gene3D" id="1.50.40.10">
    <property type="entry name" value="Mitochondrial carrier domain"/>
    <property type="match status" value="1"/>
</dbReference>
<dbReference type="InterPro" id="IPR051508">
    <property type="entry name" value="Mito_Carrier_Antiporter"/>
</dbReference>
<dbReference type="InterPro" id="IPR018108">
    <property type="entry name" value="Mitochondrial_sb/sol_carrier"/>
</dbReference>
<dbReference type="InterPro" id="IPR023395">
    <property type="entry name" value="Mt_carrier_dom_sf"/>
</dbReference>
<dbReference type="PANTHER" id="PTHR45928">
    <property type="entry name" value="RE38146P"/>
    <property type="match status" value="1"/>
</dbReference>
<dbReference type="PANTHER" id="PTHR45928:SF2">
    <property type="entry name" value="SOLUTE CARRIER FAMILY 25 MEMBER 35"/>
    <property type="match status" value="1"/>
</dbReference>
<dbReference type="Pfam" id="PF00153">
    <property type="entry name" value="Mito_carr"/>
    <property type="match status" value="3"/>
</dbReference>
<dbReference type="SUPFAM" id="SSF103506">
    <property type="entry name" value="Mitochondrial carrier"/>
    <property type="match status" value="1"/>
</dbReference>
<dbReference type="PROSITE" id="PS50920">
    <property type="entry name" value="SOLCAR"/>
    <property type="match status" value="3"/>
</dbReference>
<gene>
    <name type="primary">Slc25a35</name>
</gene>
<comment type="function">
    <text evidence="2">Putative antiporter that exchanges dicarboxylates and sulfur oxoanions across the inner membrane of mitochondria.</text>
</comment>
<comment type="catalytic activity">
    <reaction evidence="2">
        <text>a dicarboxylate(in) + sulfate(out) = a dicarboxylate(out) + sulfate(in)</text>
        <dbReference type="Rhea" id="RHEA:76595"/>
        <dbReference type="ChEBI" id="CHEBI:16189"/>
        <dbReference type="ChEBI" id="CHEBI:28965"/>
    </reaction>
</comment>
<comment type="subcellular location">
    <subcellularLocation>
        <location evidence="1">Mitochondrion inner membrane</location>
        <topology evidence="1">Multi-pass membrane protein</topology>
    </subcellularLocation>
</comment>
<comment type="similarity">
    <text evidence="4">Belongs to the mitochondrial carrier (TC 2.A.29) family.</text>
</comment>
<comment type="sequence caution" evidence="4">
    <conflict type="erroneous initiation">
        <sequence resource="EMBL-CDS" id="AAH04569"/>
    </conflict>
</comment>
<comment type="sequence caution" evidence="4">
    <conflict type="erroneous gene model prediction">
        <sequence resource="EMBL-CDS" id="CAI25535"/>
    </conflict>
</comment>
<sequence length="300" mass="32631">MDFLMSGVAACGACVFTNPLEVVKTRMQLQGELQAPGTYQRHYRNVFHAFFTIGKVDGLAALQKGLGPALLYQFLMNGIRLGTYGLAESRGYLHTNEGTHSPVRSAAAGALAGVMGAYLGSPIYMVKTHLQAQAASEIAVGHQYKHQGMFQALTEIGQKHGLVGLWRGAVGGLPRVVIGSSTQLCTFSSIKDLLSQWEIFPPQSWKVALAAAMVSGVAIVVAMTPFDVASTRLYNQPTDTRGKGLMYRGILDALLQTARTEGFFGMYKGIGASYFRLGPHTILSLFFWDQLRSFYNTYAK</sequence>
<feature type="chain" id="PRO_0000291795" description="Solute carrier family 25 member 35">
    <location>
        <begin position="1"/>
        <end position="300"/>
    </location>
</feature>
<feature type="transmembrane region" description="Helical; Name=1" evidence="3">
    <location>
        <begin position="38"/>
        <end position="58"/>
    </location>
</feature>
<feature type="transmembrane region" description="Helical; Name=2" evidence="3">
    <location>
        <begin position="59"/>
        <end position="79"/>
    </location>
</feature>
<feature type="transmembrane region" description="Helical; Name=3" evidence="3">
    <location>
        <begin position="91"/>
        <end position="119"/>
    </location>
</feature>
<feature type="transmembrane region" description="Helical; Name=4" evidence="3">
    <location>
        <begin position="169"/>
        <end position="190"/>
    </location>
</feature>
<feature type="transmembrane region" description="Helical; Name=5" evidence="3">
    <location>
        <begin position="205"/>
        <end position="225"/>
    </location>
</feature>
<feature type="transmembrane region" description="Helical; Name=6" evidence="3">
    <location>
        <begin position="277"/>
        <end position="300"/>
    </location>
</feature>
<feature type="repeat" description="Solcar 1">
    <location>
        <begin position="1"/>
        <end position="90"/>
    </location>
</feature>
<feature type="repeat" description="Solcar 2">
    <location>
        <begin position="100"/>
        <end position="193"/>
    </location>
</feature>
<feature type="repeat" description="Solcar 3">
    <location>
        <begin position="203"/>
        <end position="294"/>
    </location>
</feature>